<keyword id="KW-0067">ATP-binding</keyword>
<keyword id="KW-0963">Cytoplasm</keyword>
<keyword id="KW-0324">Glycolysis</keyword>
<keyword id="KW-0418">Kinase</keyword>
<keyword id="KW-0547">Nucleotide-binding</keyword>
<keyword id="KW-0808">Transferase</keyword>
<protein>
    <recommendedName>
        <fullName evidence="1">Phosphoglycerate kinase</fullName>
        <ecNumber evidence="1">2.7.2.3</ecNumber>
    </recommendedName>
</protein>
<name>PGK_YERPS</name>
<reference key="1">
    <citation type="journal article" date="2004" name="Proc. Natl. Acad. Sci. U.S.A.">
        <title>Insights into the evolution of Yersinia pestis through whole-genome comparison with Yersinia pseudotuberculosis.</title>
        <authorList>
            <person name="Chain P.S.G."/>
            <person name="Carniel E."/>
            <person name="Larimer F.W."/>
            <person name="Lamerdin J."/>
            <person name="Stoutland P.O."/>
            <person name="Regala W.M."/>
            <person name="Georgescu A.M."/>
            <person name="Vergez L.M."/>
            <person name="Land M.L."/>
            <person name="Motin V.L."/>
            <person name="Brubaker R.R."/>
            <person name="Fowler J."/>
            <person name="Hinnebusch J."/>
            <person name="Marceau M."/>
            <person name="Medigue C."/>
            <person name="Simonet M."/>
            <person name="Chenal-Francisque V."/>
            <person name="Souza B."/>
            <person name="Dacheux D."/>
            <person name="Elliott J.M."/>
            <person name="Derbise A."/>
            <person name="Hauser L.J."/>
            <person name="Garcia E."/>
        </authorList>
    </citation>
    <scope>NUCLEOTIDE SEQUENCE [LARGE SCALE GENOMIC DNA]</scope>
    <source>
        <strain>IP32953</strain>
    </source>
</reference>
<organism>
    <name type="scientific">Yersinia pseudotuberculosis serotype I (strain IP32953)</name>
    <dbReference type="NCBI Taxonomy" id="273123"/>
    <lineage>
        <taxon>Bacteria</taxon>
        <taxon>Pseudomonadati</taxon>
        <taxon>Pseudomonadota</taxon>
        <taxon>Gammaproteobacteria</taxon>
        <taxon>Enterobacterales</taxon>
        <taxon>Yersiniaceae</taxon>
        <taxon>Yersinia</taxon>
    </lineage>
</organism>
<dbReference type="EC" id="2.7.2.3" evidence="1"/>
<dbReference type="EMBL" id="BX936398">
    <property type="protein sequence ID" value="CAH22434.1"/>
    <property type="molecule type" value="Genomic_DNA"/>
</dbReference>
<dbReference type="RefSeq" id="WP_002209963.1">
    <property type="nucleotide sequence ID" value="NZ_CP009712.1"/>
</dbReference>
<dbReference type="SMR" id="Q666Q1"/>
<dbReference type="GeneID" id="57973719"/>
<dbReference type="KEGG" id="ypo:BZ17_3415"/>
<dbReference type="KEGG" id="yps:YPTB3196"/>
<dbReference type="PATRIC" id="fig|273123.14.peg.3584"/>
<dbReference type="UniPathway" id="UPA00109">
    <property type="reaction ID" value="UER00185"/>
</dbReference>
<dbReference type="Proteomes" id="UP000001011">
    <property type="component" value="Chromosome"/>
</dbReference>
<dbReference type="GO" id="GO:0005829">
    <property type="term" value="C:cytosol"/>
    <property type="evidence" value="ECO:0007669"/>
    <property type="project" value="TreeGrafter"/>
</dbReference>
<dbReference type="GO" id="GO:0043531">
    <property type="term" value="F:ADP binding"/>
    <property type="evidence" value="ECO:0007669"/>
    <property type="project" value="TreeGrafter"/>
</dbReference>
<dbReference type="GO" id="GO:0005524">
    <property type="term" value="F:ATP binding"/>
    <property type="evidence" value="ECO:0007669"/>
    <property type="project" value="UniProtKB-KW"/>
</dbReference>
<dbReference type="GO" id="GO:0004618">
    <property type="term" value="F:phosphoglycerate kinase activity"/>
    <property type="evidence" value="ECO:0007669"/>
    <property type="project" value="UniProtKB-UniRule"/>
</dbReference>
<dbReference type="GO" id="GO:0006094">
    <property type="term" value="P:gluconeogenesis"/>
    <property type="evidence" value="ECO:0007669"/>
    <property type="project" value="TreeGrafter"/>
</dbReference>
<dbReference type="GO" id="GO:0006096">
    <property type="term" value="P:glycolytic process"/>
    <property type="evidence" value="ECO:0007669"/>
    <property type="project" value="UniProtKB-UniRule"/>
</dbReference>
<dbReference type="FunFam" id="3.40.50.1260:FF:000001">
    <property type="entry name" value="Phosphoglycerate kinase"/>
    <property type="match status" value="1"/>
</dbReference>
<dbReference type="FunFam" id="3.40.50.1260:FF:000002">
    <property type="entry name" value="Phosphoglycerate kinase"/>
    <property type="match status" value="1"/>
</dbReference>
<dbReference type="Gene3D" id="3.40.50.1260">
    <property type="entry name" value="Phosphoglycerate kinase, N-terminal domain"/>
    <property type="match status" value="2"/>
</dbReference>
<dbReference type="HAMAP" id="MF_00145">
    <property type="entry name" value="Phosphoglyc_kinase"/>
    <property type="match status" value="1"/>
</dbReference>
<dbReference type="InterPro" id="IPR001576">
    <property type="entry name" value="Phosphoglycerate_kinase"/>
</dbReference>
<dbReference type="InterPro" id="IPR015911">
    <property type="entry name" value="Phosphoglycerate_kinase_CS"/>
</dbReference>
<dbReference type="InterPro" id="IPR015824">
    <property type="entry name" value="Phosphoglycerate_kinase_N"/>
</dbReference>
<dbReference type="InterPro" id="IPR036043">
    <property type="entry name" value="Phosphoglycerate_kinase_sf"/>
</dbReference>
<dbReference type="PANTHER" id="PTHR11406">
    <property type="entry name" value="PHOSPHOGLYCERATE KINASE"/>
    <property type="match status" value="1"/>
</dbReference>
<dbReference type="PANTHER" id="PTHR11406:SF23">
    <property type="entry name" value="PHOSPHOGLYCERATE KINASE 1, CHLOROPLASTIC-RELATED"/>
    <property type="match status" value="1"/>
</dbReference>
<dbReference type="Pfam" id="PF00162">
    <property type="entry name" value="PGK"/>
    <property type="match status" value="1"/>
</dbReference>
<dbReference type="PIRSF" id="PIRSF000724">
    <property type="entry name" value="Pgk"/>
    <property type="match status" value="1"/>
</dbReference>
<dbReference type="PRINTS" id="PR00477">
    <property type="entry name" value="PHGLYCKINASE"/>
</dbReference>
<dbReference type="SUPFAM" id="SSF53748">
    <property type="entry name" value="Phosphoglycerate kinase"/>
    <property type="match status" value="1"/>
</dbReference>
<dbReference type="PROSITE" id="PS00111">
    <property type="entry name" value="PGLYCERATE_KINASE"/>
    <property type="match status" value="1"/>
</dbReference>
<sequence length="387" mass="41074">MSVIKMTDLDLAGKRVLIRADLNVPVKEGKVTSDARIRASLPTIEAALKQGAKVMVTSHLGRPTEGEYNEEFSLLPVVNYLKEKLSSPVRLAKDYLDGVEIAAGELVVLENVRFNKGEKKDDEALSKKYAALCDVYVMDAFGTAHRAQASTHGVGKFAPIACAGPLLSAELEALGKALGNPARPMVAIVGGSKVSTKLTVLGALSKIADKLIVGGGIANTFVAAQGHNVGKSLYEADLIPEAKRLLETCDIPVPTDVRVATEFSETAAATLKPANEIKDDEQILDLGDESAERLAEILKNAKTILWNGPVGVFEFPNFRKGTEIVARAIAESEAFSIAGGGDTLAAIDLFGIADQISYISTGGGAFLEFVEGKKLPAVVMLEERAKQ</sequence>
<proteinExistence type="inferred from homology"/>
<gene>
    <name evidence="1" type="primary">pgk</name>
    <name type="ordered locus">YPTB3196</name>
</gene>
<evidence type="ECO:0000255" key="1">
    <source>
        <dbReference type="HAMAP-Rule" id="MF_00145"/>
    </source>
</evidence>
<comment type="catalytic activity">
    <reaction evidence="1">
        <text>(2R)-3-phosphoglycerate + ATP = (2R)-3-phospho-glyceroyl phosphate + ADP</text>
        <dbReference type="Rhea" id="RHEA:14801"/>
        <dbReference type="ChEBI" id="CHEBI:30616"/>
        <dbReference type="ChEBI" id="CHEBI:57604"/>
        <dbReference type="ChEBI" id="CHEBI:58272"/>
        <dbReference type="ChEBI" id="CHEBI:456216"/>
        <dbReference type="EC" id="2.7.2.3"/>
    </reaction>
</comment>
<comment type="pathway">
    <text evidence="1">Carbohydrate degradation; glycolysis; pyruvate from D-glyceraldehyde 3-phosphate: step 2/5.</text>
</comment>
<comment type="subunit">
    <text evidence="1">Monomer.</text>
</comment>
<comment type="subcellular location">
    <subcellularLocation>
        <location evidence="1">Cytoplasm</location>
    </subcellularLocation>
</comment>
<comment type="similarity">
    <text evidence="1">Belongs to the phosphoglycerate kinase family.</text>
</comment>
<accession>Q666Q1</accession>
<feature type="chain" id="PRO_1000058100" description="Phosphoglycerate kinase">
    <location>
        <begin position="1"/>
        <end position="387"/>
    </location>
</feature>
<feature type="binding site" evidence="1">
    <location>
        <begin position="21"/>
        <end position="23"/>
    </location>
    <ligand>
        <name>substrate</name>
    </ligand>
</feature>
<feature type="binding site" evidence="1">
    <location>
        <position position="36"/>
    </location>
    <ligand>
        <name>substrate</name>
    </ligand>
</feature>
<feature type="binding site" evidence="1">
    <location>
        <begin position="59"/>
        <end position="62"/>
    </location>
    <ligand>
        <name>substrate</name>
    </ligand>
</feature>
<feature type="binding site" evidence="1">
    <location>
        <position position="113"/>
    </location>
    <ligand>
        <name>substrate</name>
    </ligand>
</feature>
<feature type="binding site" evidence="1">
    <location>
        <position position="146"/>
    </location>
    <ligand>
        <name>substrate</name>
    </ligand>
</feature>
<feature type="binding site" evidence="1">
    <location>
        <position position="197"/>
    </location>
    <ligand>
        <name>ATP</name>
        <dbReference type="ChEBI" id="CHEBI:30616"/>
    </ligand>
</feature>
<feature type="binding site" evidence="1">
    <location>
        <position position="314"/>
    </location>
    <ligand>
        <name>ATP</name>
        <dbReference type="ChEBI" id="CHEBI:30616"/>
    </ligand>
</feature>
<feature type="binding site" evidence="1">
    <location>
        <begin position="340"/>
        <end position="343"/>
    </location>
    <ligand>
        <name>ATP</name>
        <dbReference type="ChEBI" id="CHEBI:30616"/>
    </ligand>
</feature>